<keyword id="KW-0687">Ribonucleoprotein</keyword>
<keyword id="KW-0689">Ribosomal protein</keyword>
<keyword id="KW-0694">RNA-binding</keyword>
<keyword id="KW-0699">rRNA-binding</keyword>
<protein>
    <recommendedName>
        <fullName evidence="1">Large ribosomal subunit protein uL18</fullName>
    </recommendedName>
    <alternativeName>
        <fullName evidence="2">50S ribosomal protein L18</fullName>
    </alternativeName>
</protein>
<gene>
    <name evidence="1" type="primary">rplR</name>
    <name type="ordered locus">BamMC406_0292</name>
</gene>
<feature type="chain" id="PRO_1000142629" description="Large ribosomal subunit protein uL18">
    <location>
        <begin position="1"/>
        <end position="121"/>
    </location>
</feature>
<dbReference type="EMBL" id="CP001025">
    <property type="protein sequence ID" value="ACB62793.1"/>
    <property type="molecule type" value="Genomic_DNA"/>
</dbReference>
<dbReference type="RefSeq" id="WP_006477183.1">
    <property type="nucleotide sequence ID" value="NC_010551.1"/>
</dbReference>
<dbReference type="SMR" id="B1YRP5"/>
<dbReference type="GeneID" id="98107144"/>
<dbReference type="KEGG" id="bac:BamMC406_0292"/>
<dbReference type="HOGENOM" id="CLU_098841_0_1_4"/>
<dbReference type="OrthoDB" id="9810939at2"/>
<dbReference type="Proteomes" id="UP000001680">
    <property type="component" value="Chromosome 1"/>
</dbReference>
<dbReference type="GO" id="GO:0022625">
    <property type="term" value="C:cytosolic large ribosomal subunit"/>
    <property type="evidence" value="ECO:0007669"/>
    <property type="project" value="TreeGrafter"/>
</dbReference>
<dbReference type="GO" id="GO:0008097">
    <property type="term" value="F:5S rRNA binding"/>
    <property type="evidence" value="ECO:0007669"/>
    <property type="project" value="TreeGrafter"/>
</dbReference>
<dbReference type="GO" id="GO:0003735">
    <property type="term" value="F:structural constituent of ribosome"/>
    <property type="evidence" value="ECO:0007669"/>
    <property type="project" value="InterPro"/>
</dbReference>
<dbReference type="GO" id="GO:0006412">
    <property type="term" value="P:translation"/>
    <property type="evidence" value="ECO:0007669"/>
    <property type="project" value="UniProtKB-UniRule"/>
</dbReference>
<dbReference type="CDD" id="cd00432">
    <property type="entry name" value="Ribosomal_L18_L5e"/>
    <property type="match status" value="1"/>
</dbReference>
<dbReference type="FunFam" id="3.30.420.100:FF:000001">
    <property type="entry name" value="50S ribosomal protein L18"/>
    <property type="match status" value="1"/>
</dbReference>
<dbReference type="Gene3D" id="3.30.420.100">
    <property type="match status" value="1"/>
</dbReference>
<dbReference type="HAMAP" id="MF_01337_B">
    <property type="entry name" value="Ribosomal_uL18_B"/>
    <property type="match status" value="1"/>
</dbReference>
<dbReference type="InterPro" id="IPR004389">
    <property type="entry name" value="Ribosomal_uL18_bac-type"/>
</dbReference>
<dbReference type="InterPro" id="IPR005484">
    <property type="entry name" value="Ribosomal_uL18_bac/euk"/>
</dbReference>
<dbReference type="NCBIfam" id="TIGR00060">
    <property type="entry name" value="L18_bact"/>
    <property type="match status" value="1"/>
</dbReference>
<dbReference type="PANTHER" id="PTHR12899">
    <property type="entry name" value="39S RIBOSOMAL PROTEIN L18, MITOCHONDRIAL"/>
    <property type="match status" value="1"/>
</dbReference>
<dbReference type="PANTHER" id="PTHR12899:SF3">
    <property type="entry name" value="LARGE RIBOSOMAL SUBUNIT PROTEIN UL18M"/>
    <property type="match status" value="1"/>
</dbReference>
<dbReference type="Pfam" id="PF00861">
    <property type="entry name" value="Ribosomal_L18p"/>
    <property type="match status" value="1"/>
</dbReference>
<dbReference type="SUPFAM" id="SSF53137">
    <property type="entry name" value="Translational machinery components"/>
    <property type="match status" value="1"/>
</dbReference>
<evidence type="ECO:0000255" key="1">
    <source>
        <dbReference type="HAMAP-Rule" id="MF_01337"/>
    </source>
</evidence>
<evidence type="ECO:0000305" key="2"/>
<name>RL18_BURA4</name>
<organism>
    <name type="scientific">Burkholderia ambifaria (strain MC40-6)</name>
    <dbReference type="NCBI Taxonomy" id="398577"/>
    <lineage>
        <taxon>Bacteria</taxon>
        <taxon>Pseudomonadati</taxon>
        <taxon>Pseudomonadota</taxon>
        <taxon>Betaproteobacteria</taxon>
        <taxon>Burkholderiales</taxon>
        <taxon>Burkholderiaceae</taxon>
        <taxon>Burkholderia</taxon>
        <taxon>Burkholderia cepacia complex</taxon>
    </lineage>
</organism>
<accession>B1YRP5</accession>
<proteinExistence type="inferred from homology"/>
<sequence length="121" mass="13106">MDKTQSRLRRARQTRIKIAELQVARLAVHRTNTHIYAQVFSPCGTKVLASASTLEAEVRAELADKSGKGGNVNAATLIGKRIAEKAKAAGIESVAFDRSGFRYHGRVKALAEAAREAGLKF</sequence>
<comment type="function">
    <text evidence="1">This is one of the proteins that bind and probably mediate the attachment of the 5S RNA into the large ribosomal subunit, where it forms part of the central protuberance.</text>
</comment>
<comment type="subunit">
    <text evidence="1">Part of the 50S ribosomal subunit; part of the 5S rRNA/L5/L18/L25 subcomplex. Contacts the 5S and 23S rRNAs.</text>
</comment>
<comment type="similarity">
    <text evidence="1">Belongs to the universal ribosomal protein uL18 family.</text>
</comment>
<reference key="1">
    <citation type="submission" date="2008-04" db="EMBL/GenBank/DDBJ databases">
        <title>Complete sequence of chromosome 1 of Burkholderia ambifaria MC40-6.</title>
        <authorList>
            <person name="Copeland A."/>
            <person name="Lucas S."/>
            <person name="Lapidus A."/>
            <person name="Glavina del Rio T."/>
            <person name="Dalin E."/>
            <person name="Tice H."/>
            <person name="Pitluck S."/>
            <person name="Chain P."/>
            <person name="Malfatti S."/>
            <person name="Shin M."/>
            <person name="Vergez L."/>
            <person name="Lang D."/>
            <person name="Schmutz J."/>
            <person name="Larimer F."/>
            <person name="Land M."/>
            <person name="Hauser L."/>
            <person name="Kyrpides N."/>
            <person name="Lykidis A."/>
            <person name="Ramette A."/>
            <person name="Konstantinidis K."/>
            <person name="Tiedje J."/>
            <person name="Richardson P."/>
        </authorList>
    </citation>
    <scope>NUCLEOTIDE SEQUENCE [LARGE SCALE GENOMIC DNA]</scope>
    <source>
        <strain>MC40-6</strain>
    </source>
</reference>